<proteinExistence type="evidence at protein level"/>
<reference key="1">
    <citation type="journal article" date="2010" name="Phytochemistry">
        <title>Geraniol and linalool synthases from wild species of perilla.</title>
        <authorList>
            <person name="Masumoto N."/>
            <person name="Korin M."/>
            <person name="Ito M."/>
        </authorList>
    </citation>
    <scope>NUCLEOTIDE SEQUENCE [MRNA]</scope>
    <scope>FUNCTION</scope>
    <scope>CATALYTIC ACTIVITY</scope>
    <scope>PATHWAY</scope>
    <scope>COFACTOR</scope>
    <source>
        <strain>cv. 5073</strain>
    </source>
</reference>
<accession>C0KWV6</accession>
<evidence type="ECO:0000250" key="1">
    <source>
        <dbReference type="UniProtKB" id="A0A1C9J6A7"/>
    </source>
</evidence>
<evidence type="ECO:0000250" key="2">
    <source>
        <dbReference type="UniProtKB" id="Q40577"/>
    </source>
</evidence>
<evidence type="ECO:0000250" key="3">
    <source>
        <dbReference type="UniProtKB" id="Q6JD73"/>
    </source>
</evidence>
<evidence type="ECO:0000255" key="4"/>
<evidence type="ECO:0000269" key="5">
    <source>
    </source>
</evidence>
<evidence type="ECO:0000303" key="6">
    <source>
    </source>
</evidence>
<evidence type="ECO:0000305" key="7"/>
<sequence length="603" mass="69805">MCSISQKVVIGLNKAAANNNLQNLDRRGFKTRCVSSSKAASCLRASCSLQLDVKPAQEGRRSGNYQPSIWDFNYVQSLNTPYKEERYLTRHAELIVQVKPLLEKKMEAAQQLELIDDLNNLGLSYFFQDRIKQILSFIYDENQCFHSNINDQAEKRDLYFTALGFKLLRQHGFDVSQEVFDCFKNDNGSDFKASLSDNTKGLLQLYEASFLVREGEDTLEQARQFATKFLRRKLDEIDDNHLLSCIHHSLEIPLHWRIQRLEARWFLDAYATRHDMNPAILELAKLDFNIIQATHQEELKDVSRWWQNTRLAEKLPFVRDRLVESYFWAIALFEPHQYGYQRRVAAKIITLATSIDDVYDIYGTLDELQLFTDNFRRWDTESLGIPPYSMQLFYMVIHNFVSELACEILKEKGFIVIPYLQRSWIDLAESFLKEANWYYSGYTPSLEEYIDNGSVSIGAVAVLSQVYFTLANSIEKPKIESMYKYHHILRLSGLLVRLHDDLGTSLFEKKRGDVPKAVEICMKERNVTEEEAEEHVKYLIREAWKEMNTATAAAGCPFMDELNVAAANLGRAAQFVYLDGDGHGVQHSKIHQQMGGLMFEPYL</sequence>
<feature type="transit peptide" description="Chloroplast" evidence="4">
    <location>
        <begin position="1"/>
        <end position="35"/>
    </location>
</feature>
<feature type="chain" id="PRO_0000455251" description="Geraniol synthase Tps-5073G30, chloroplastic">
    <location>
        <begin position="36"/>
        <end position="603"/>
    </location>
</feature>
<feature type="short sequence motif" description="DDXXD motif" evidence="7">
    <location>
        <begin position="356"/>
        <end position="360"/>
    </location>
</feature>
<feature type="binding site" evidence="2">
    <location>
        <position position="319"/>
    </location>
    <ligand>
        <name>(2E)-geranyl diphosphate</name>
        <dbReference type="ChEBI" id="CHEBI:58057"/>
    </ligand>
</feature>
<feature type="binding site" evidence="2">
    <location>
        <position position="356"/>
    </location>
    <ligand>
        <name>(2E)-geranyl diphosphate</name>
        <dbReference type="ChEBI" id="CHEBI:58057"/>
    </ligand>
</feature>
<feature type="binding site" evidence="2">
    <location>
        <position position="356"/>
    </location>
    <ligand>
        <name>Mg(2+)</name>
        <dbReference type="ChEBI" id="CHEBI:18420"/>
        <label>1</label>
    </ligand>
</feature>
<feature type="binding site" evidence="2">
    <location>
        <position position="356"/>
    </location>
    <ligand>
        <name>Mg(2+)</name>
        <dbReference type="ChEBI" id="CHEBI:18420"/>
        <label>2</label>
    </ligand>
</feature>
<feature type="binding site" evidence="2">
    <location>
        <position position="360"/>
    </location>
    <ligand>
        <name>(2E)-geranyl diphosphate</name>
        <dbReference type="ChEBI" id="CHEBI:58057"/>
    </ligand>
</feature>
<feature type="binding site" evidence="2">
    <location>
        <position position="360"/>
    </location>
    <ligand>
        <name>Mg(2+)</name>
        <dbReference type="ChEBI" id="CHEBI:18420"/>
        <label>1</label>
    </ligand>
</feature>
<feature type="binding site" evidence="2">
    <location>
        <position position="360"/>
    </location>
    <ligand>
        <name>Mg(2+)</name>
        <dbReference type="ChEBI" id="CHEBI:18420"/>
        <label>2</label>
    </ligand>
</feature>
<feature type="binding site" evidence="2">
    <location>
        <position position="497"/>
    </location>
    <ligand>
        <name>(2E)-geranyl diphosphate</name>
        <dbReference type="ChEBI" id="CHEBI:58057"/>
    </ligand>
</feature>
<feature type="binding site" evidence="2">
    <location>
        <position position="500"/>
    </location>
    <ligand>
        <name>(2E)-geranyl diphosphate</name>
        <dbReference type="ChEBI" id="CHEBI:58057"/>
    </ligand>
</feature>
<feature type="binding site" evidence="2">
    <location>
        <position position="500"/>
    </location>
    <ligand>
        <name>Mg(2+)</name>
        <dbReference type="ChEBI" id="CHEBI:18420"/>
        <label>3</label>
    </ligand>
</feature>
<feature type="binding site" evidence="2">
    <location>
        <position position="504"/>
    </location>
    <ligand>
        <name>Mg(2+)</name>
        <dbReference type="ChEBI" id="CHEBI:18420"/>
        <label>3</label>
    </ligand>
</feature>
<feature type="binding site" evidence="2">
    <location>
        <position position="508"/>
    </location>
    <ligand>
        <name>Mg(2+)</name>
        <dbReference type="ChEBI" id="CHEBI:18420"/>
        <label>3</label>
    </ligand>
</feature>
<protein>
    <recommendedName>
        <fullName evidence="6">Geraniol synthase Tps-5073G30, chloroplastic</fullName>
        <shortName evidence="6">PfTps-5073G</shortName>
        <ecNumber evidence="5">3.1.7.11</ecNumber>
    </recommendedName>
</protein>
<organism>
    <name type="scientific">Perilla frutescens</name>
    <name type="common">Beefsteak mint</name>
    <name type="synonym">Perilla ocymoides</name>
    <dbReference type="NCBI Taxonomy" id="48386"/>
    <lineage>
        <taxon>Eukaryota</taxon>
        <taxon>Viridiplantae</taxon>
        <taxon>Streptophyta</taxon>
        <taxon>Embryophyta</taxon>
        <taxon>Tracheophyta</taxon>
        <taxon>Spermatophyta</taxon>
        <taxon>Magnoliopsida</taxon>
        <taxon>eudicotyledons</taxon>
        <taxon>Gunneridae</taxon>
        <taxon>Pentapetalae</taxon>
        <taxon>asterids</taxon>
        <taxon>lamiids</taxon>
        <taxon>Lamiales</taxon>
        <taxon>Lamiaceae</taxon>
        <taxon>Nepetoideae</taxon>
        <taxon>Elsholtzieae</taxon>
        <taxon>Perilla</taxon>
    </lineage>
</organism>
<dbReference type="EC" id="3.1.7.11" evidence="5"/>
<dbReference type="EMBL" id="FJ644547">
    <property type="protein sequence ID" value="ACN42012.1"/>
    <property type="molecule type" value="mRNA"/>
</dbReference>
<dbReference type="SMR" id="C0KWV6"/>
<dbReference type="BRENDA" id="3.1.7.11">
    <property type="organism ID" value="11839"/>
</dbReference>
<dbReference type="UniPathway" id="UPA00213"/>
<dbReference type="GO" id="GO:0009507">
    <property type="term" value="C:chloroplast"/>
    <property type="evidence" value="ECO:0007669"/>
    <property type="project" value="UniProtKB-SubCell"/>
</dbReference>
<dbReference type="GO" id="GO:0016787">
    <property type="term" value="F:hydrolase activity"/>
    <property type="evidence" value="ECO:0007669"/>
    <property type="project" value="UniProtKB-KW"/>
</dbReference>
<dbReference type="GO" id="GO:0000287">
    <property type="term" value="F:magnesium ion binding"/>
    <property type="evidence" value="ECO:0007669"/>
    <property type="project" value="InterPro"/>
</dbReference>
<dbReference type="GO" id="GO:0010333">
    <property type="term" value="F:terpene synthase activity"/>
    <property type="evidence" value="ECO:0007669"/>
    <property type="project" value="InterPro"/>
</dbReference>
<dbReference type="GO" id="GO:0016102">
    <property type="term" value="P:diterpenoid biosynthetic process"/>
    <property type="evidence" value="ECO:0007669"/>
    <property type="project" value="InterPro"/>
</dbReference>
<dbReference type="GO" id="GO:1903448">
    <property type="term" value="P:geraniol biosynthetic process"/>
    <property type="evidence" value="ECO:0000314"/>
    <property type="project" value="UniProtKB"/>
</dbReference>
<dbReference type="GO" id="GO:0016099">
    <property type="term" value="P:monoterpenoid biosynthetic process"/>
    <property type="evidence" value="ECO:0000314"/>
    <property type="project" value="UniProtKB"/>
</dbReference>
<dbReference type="CDD" id="cd00684">
    <property type="entry name" value="Terpene_cyclase_plant_C1"/>
    <property type="match status" value="1"/>
</dbReference>
<dbReference type="FunFam" id="1.10.600.10:FF:000007">
    <property type="entry name" value="Isoprene synthase, chloroplastic"/>
    <property type="match status" value="1"/>
</dbReference>
<dbReference type="FunFam" id="1.50.10.130:FF:000001">
    <property type="entry name" value="Isoprene synthase, chloroplastic"/>
    <property type="match status" value="1"/>
</dbReference>
<dbReference type="Gene3D" id="1.10.600.10">
    <property type="entry name" value="Farnesyl Diphosphate Synthase"/>
    <property type="match status" value="1"/>
</dbReference>
<dbReference type="Gene3D" id="1.50.10.130">
    <property type="entry name" value="Terpene synthase, N-terminal domain"/>
    <property type="match status" value="1"/>
</dbReference>
<dbReference type="InterPro" id="IPR008949">
    <property type="entry name" value="Isoprenoid_synthase_dom_sf"/>
</dbReference>
<dbReference type="InterPro" id="IPR034741">
    <property type="entry name" value="Terpene_cyclase-like_1_C"/>
</dbReference>
<dbReference type="InterPro" id="IPR044814">
    <property type="entry name" value="Terpene_cyclase_plant_C1"/>
</dbReference>
<dbReference type="InterPro" id="IPR001906">
    <property type="entry name" value="Terpene_synth_N"/>
</dbReference>
<dbReference type="InterPro" id="IPR036965">
    <property type="entry name" value="Terpene_synth_N_sf"/>
</dbReference>
<dbReference type="InterPro" id="IPR050148">
    <property type="entry name" value="Terpene_synthase-like"/>
</dbReference>
<dbReference type="InterPro" id="IPR005630">
    <property type="entry name" value="Terpene_synthase_metal-bd"/>
</dbReference>
<dbReference type="InterPro" id="IPR008930">
    <property type="entry name" value="Terpenoid_cyclase/PrenylTrfase"/>
</dbReference>
<dbReference type="PANTHER" id="PTHR31225">
    <property type="entry name" value="OS04G0344100 PROTEIN-RELATED"/>
    <property type="match status" value="1"/>
</dbReference>
<dbReference type="PANTHER" id="PTHR31225:SF9">
    <property type="entry name" value="TERPENE SYNTHASE 10"/>
    <property type="match status" value="1"/>
</dbReference>
<dbReference type="Pfam" id="PF01397">
    <property type="entry name" value="Terpene_synth"/>
    <property type="match status" value="1"/>
</dbReference>
<dbReference type="Pfam" id="PF03936">
    <property type="entry name" value="Terpene_synth_C"/>
    <property type="match status" value="1"/>
</dbReference>
<dbReference type="SFLD" id="SFLDS00005">
    <property type="entry name" value="Isoprenoid_Synthase_Type_I"/>
    <property type="match status" value="1"/>
</dbReference>
<dbReference type="SFLD" id="SFLDG01019">
    <property type="entry name" value="Terpene_Cyclase_Like_1_C_Termi"/>
    <property type="match status" value="1"/>
</dbReference>
<dbReference type="SFLD" id="SFLDG01014">
    <property type="entry name" value="Terpene_Cyclase_Like_1_N-term"/>
    <property type="match status" value="1"/>
</dbReference>
<dbReference type="SUPFAM" id="SSF48239">
    <property type="entry name" value="Terpenoid cyclases/Protein prenyltransferases"/>
    <property type="match status" value="1"/>
</dbReference>
<dbReference type="SUPFAM" id="SSF48576">
    <property type="entry name" value="Terpenoid synthases"/>
    <property type="match status" value="1"/>
</dbReference>
<gene>
    <name evidence="6" type="primary">Tps-5073G30</name>
</gene>
<keyword id="KW-0150">Chloroplast</keyword>
<keyword id="KW-0378">Hydrolase</keyword>
<keyword id="KW-0460">Magnesium</keyword>
<keyword id="KW-0479">Metal-binding</keyword>
<keyword id="KW-0934">Plastid</keyword>
<keyword id="KW-0809">Transit peptide</keyword>
<comment type="function">
    <text evidence="5">Monoterpene synthase (mono-TPS) involved in the biosynthesis of monoterpenes natural products (PubMed:20447664). Catalyzes the conversion of (2E)-geranyl diphosphate (GPP) into geraniol (PubMed:20447664).</text>
</comment>
<comment type="catalytic activity">
    <reaction evidence="5">
        <text>(2E)-geranyl diphosphate + H2O = (2E)-geraniol + diphosphate</text>
        <dbReference type="Rhea" id="RHEA:32679"/>
        <dbReference type="ChEBI" id="CHEBI:15377"/>
        <dbReference type="ChEBI" id="CHEBI:17447"/>
        <dbReference type="ChEBI" id="CHEBI:33019"/>
        <dbReference type="ChEBI" id="CHEBI:58057"/>
        <dbReference type="EC" id="3.1.7.11"/>
    </reaction>
    <physiologicalReaction direction="left-to-right" evidence="5">
        <dbReference type="Rhea" id="RHEA:32680"/>
    </physiologicalReaction>
</comment>
<comment type="cofactor">
    <cofactor evidence="5">
        <name>Mg(2+)</name>
        <dbReference type="ChEBI" id="CHEBI:18420"/>
    </cofactor>
    <cofactor evidence="5">
        <name>Mn(2+)</name>
        <dbReference type="ChEBI" id="CHEBI:29035"/>
    </cofactor>
    <text evidence="1">Binds 3 Mg(2+) or Mn(2+) ions per subunit.</text>
</comment>
<comment type="pathway">
    <text evidence="5">Secondary metabolite biosynthesis; terpenoid biosynthesis.</text>
</comment>
<comment type="subunit">
    <text evidence="3">Monomer.</text>
</comment>
<comment type="subcellular location">
    <subcellularLocation>
        <location evidence="4">Plastid</location>
        <location evidence="4">Chloroplast</location>
    </subcellularLocation>
</comment>
<comment type="domain">
    <text evidence="7">The Asp-Asp-Xaa-Xaa-Asp/Glu (DDXXD/E) motif is important for the catalytic activity, presumably through binding to Mg(2+).</text>
</comment>
<comment type="similarity">
    <text evidence="7">Belongs to the terpene synthase family. Tpsb subfamily.</text>
</comment>
<name>GRNL7_PERFR</name>